<feature type="chain" id="PRO_0000452156" description="BREX protein BrxB">
    <location>
        <begin position="1"/>
        <end position="200"/>
    </location>
</feature>
<name>BRXB_ECOHS</name>
<comment type="function">
    <text evidence="1">BREX systems (bacteriophage exclusion) provide immunity against bacteriophage. Part of a type 1 BREX system which protects against dsDNA phage. This system allows phage adsorption but prevents phage DNA replication, without degradation of the phage DNA. Methylation of bacterial DNA by PglX guides self/non-self discrimination. When the brxA-brxB-brxC-pglX-pglZ-brxL genes are transformed into a susceptible E.coli strain (BW25113) they confer very high resistance to infection by bacteriophage VR7 and VpaE1, about 100-fold protection against lambda, T5 and T7 and no protection against RNA phage Qbeta, ssDNA phage M13 or dSDNA phage T4 and VR5. Glycosylated phage DNA is not susceptible to BREX. The BREX system does not confer resistance to lysogenic lambda phage, i.e. prophage that are integrated into the chromosomal DNA and then induced to form phage.</text>
</comment>
<comment type="induction">
    <text evidence="1">Transcribed at slowly increasing levels as cells progress from lag to exponential to stationary phase.</text>
</comment>
<comment type="disruption phenotype">
    <text evidence="1">No methylation of 5'-GGTAAG-3' in chromosomal DNA, BREX no longer confers phage resistance.</text>
</comment>
<comment type="similarity">
    <text evidence="3">Belongs to the BrxB family.</text>
</comment>
<proteinExistence type="evidence at protein level"/>
<dbReference type="EMBL" id="CP000802">
    <property type="protein sequence ID" value="ABV04725.1"/>
    <property type="molecule type" value="Genomic_DNA"/>
</dbReference>
<dbReference type="RefSeq" id="WP_000566901.1">
    <property type="nucleotide sequence ID" value="NC_009800.1"/>
</dbReference>
<dbReference type="KEGG" id="ecx:EcHS_A0337"/>
<dbReference type="GO" id="GO:0051607">
    <property type="term" value="P:defense response to virus"/>
    <property type="evidence" value="ECO:0007669"/>
    <property type="project" value="UniProtKB-KW"/>
</dbReference>
<dbReference type="InterPro" id="IPR014858">
    <property type="entry name" value="BrxB"/>
</dbReference>
<dbReference type="Pfam" id="PF08747">
    <property type="entry name" value="BrxB"/>
    <property type="match status" value="1"/>
</dbReference>
<protein>
    <recommendedName>
        <fullName evidence="2">BREX protein BrxB</fullName>
    </recommendedName>
</protein>
<gene>
    <name evidence="2" type="primary">brxB</name>
    <name type="ordered locus">EcHS_A0337</name>
</gene>
<keyword id="KW-0051">Antiviral defense</keyword>
<sequence>MIDPVLEYRLSQIQSRINEDRFLKNNGSGNEIGFWIFDYPAQCELQVREHLKYLLRHLEKDHKFACLNVFQIIIDMLNERGLFERVCQQEVKVGTETLKKQLAGPLNQKKIADFIAKKVDLAAQDFVILTGMGNAWPLVRGHELMSALQDVMGFTPLLMFYPGTYSGYNLSPLTDTGSQNYYRAFRLVPDTGPAATLNPQ</sequence>
<organism>
    <name type="scientific">Escherichia coli O9:H4 (strain HS)</name>
    <dbReference type="NCBI Taxonomy" id="331112"/>
    <lineage>
        <taxon>Bacteria</taxon>
        <taxon>Pseudomonadati</taxon>
        <taxon>Pseudomonadota</taxon>
        <taxon>Gammaproteobacteria</taxon>
        <taxon>Enterobacterales</taxon>
        <taxon>Enterobacteriaceae</taxon>
        <taxon>Escherichia</taxon>
    </lineage>
</organism>
<accession>P0DUF7</accession>
<accession>A0A7M3S2P2</accession>
<evidence type="ECO:0000269" key="1">
    <source>
    </source>
</evidence>
<evidence type="ECO:0000303" key="2">
    <source>
    </source>
</evidence>
<evidence type="ECO:0000305" key="3"/>
<reference key="1">
    <citation type="journal article" date="2008" name="J. Bacteriol.">
        <title>The pangenome structure of Escherichia coli: comparative genomic analysis of E. coli commensal and pathogenic isolates.</title>
        <authorList>
            <person name="Rasko D.A."/>
            <person name="Rosovitz M.J."/>
            <person name="Myers G.S.A."/>
            <person name="Mongodin E.F."/>
            <person name="Fricke W.F."/>
            <person name="Gajer P."/>
            <person name="Crabtree J."/>
            <person name="Sebaihia M."/>
            <person name="Thomson N.R."/>
            <person name="Chaudhuri R."/>
            <person name="Henderson I.R."/>
            <person name="Sperandio V."/>
            <person name="Ravel J."/>
        </authorList>
    </citation>
    <scope>NUCLEOTIDE SEQUENCE [LARGE SCALE GENOMIC DNA]</scope>
    <source>
        <strain>HS</strain>
    </source>
</reference>
<reference key="2">
    <citation type="journal article" date="2019" name="Nucleic Acids Res.">
        <title>BREX system of Escherichia coli distinguishes self from non-self by methylation of a specific DNA site.</title>
        <authorList>
            <person name="Gordeeva J."/>
            <person name="Morozova N."/>
            <person name="Sierro N."/>
            <person name="Isaev A."/>
            <person name="Sinkunas T."/>
            <person name="Tsvetkova K."/>
            <person name="Matlashov M."/>
            <person name="Truncaite L."/>
            <person name="Morgan R.D."/>
            <person name="Ivanov N.V."/>
            <person name="Siksnys V."/>
            <person name="Zeng L."/>
            <person name="Severinov K."/>
        </authorList>
    </citation>
    <scope>FUNCTION IN ANTIVIRAL DEFENSE</scope>
    <scope>INDUCTION</scope>
    <scope>DISRUPTION PHENOTYPE</scope>
    <source>
        <strain>HS</strain>
    </source>
</reference>